<comment type="function">
    <text evidence="1">PPIases accelerate the folding of proteins. It catalyzes the cis-trans isomerization of proline imidic peptide bonds in oligopeptides (By similarity).</text>
</comment>
<comment type="catalytic activity">
    <reaction>
        <text>[protein]-peptidylproline (omega=180) = [protein]-peptidylproline (omega=0)</text>
        <dbReference type="Rhea" id="RHEA:16237"/>
        <dbReference type="Rhea" id="RHEA-COMP:10747"/>
        <dbReference type="Rhea" id="RHEA-COMP:10748"/>
        <dbReference type="ChEBI" id="CHEBI:83833"/>
        <dbReference type="ChEBI" id="CHEBI:83834"/>
        <dbReference type="EC" id="5.2.1.8"/>
    </reaction>
</comment>
<comment type="similarity">
    <text evidence="3">Belongs to the cyclophilin-type PPIase family. PPIL3 subfamily.</text>
</comment>
<evidence type="ECO:0000250" key="1"/>
<evidence type="ECO:0000255" key="2">
    <source>
        <dbReference type="PROSITE-ProRule" id="PRU00156"/>
    </source>
</evidence>
<evidence type="ECO:0000305" key="3"/>
<proteinExistence type="inferred from homology"/>
<feature type="chain" id="PRO_0000232969" description="Peptidyl-prolyl cis-trans isomerase-like 3">
    <location>
        <begin position="1"/>
        <end position="167"/>
    </location>
</feature>
<feature type="domain" description="PPIase cyclophilin-type" evidence="2">
    <location>
        <begin position="1"/>
        <end position="153"/>
    </location>
</feature>
<sequence>MSVTLHTNLGDIKIELFCESVPRTAENFLALCASGQYDGTLFHRNIRGFMIQGGDPTGTGKGGQSIWGRPFSDEIRQTLRFNNRGMVAMANAGPDTNKSQFFITYAKQPSLDGKYSIFGKVIDGMETLDSMEKTPVNPKSRPLQEIKLLNVTVHANPIADQAKGGLA</sequence>
<name>PPIL3_CRYNJ</name>
<reference key="1">
    <citation type="journal article" date="2005" name="Science">
        <title>The genome of the basidiomycetous yeast and human pathogen Cryptococcus neoformans.</title>
        <authorList>
            <person name="Loftus B.J."/>
            <person name="Fung E."/>
            <person name="Roncaglia P."/>
            <person name="Rowley D."/>
            <person name="Amedeo P."/>
            <person name="Bruno D."/>
            <person name="Vamathevan J."/>
            <person name="Miranda M."/>
            <person name="Anderson I.J."/>
            <person name="Fraser J.A."/>
            <person name="Allen J.E."/>
            <person name="Bosdet I.E."/>
            <person name="Brent M.R."/>
            <person name="Chiu R."/>
            <person name="Doering T.L."/>
            <person name="Donlin M.J."/>
            <person name="D'Souza C.A."/>
            <person name="Fox D.S."/>
            <person name="Grinberg V."/>
            <person name="Fu J."/>
            <person name="Fukushima M."/>
            <person name="Haas B.J."/>
            <person name="Huang J.C."/>
            <person name="Janbon G."/>
            <person name="Jones S.J.M."/>
            <person name="Koo H.L."/>
            <person name="Krzywinski M.I."/>
            <person name="Kwon-Chung K.J."/>
            <person name="Lengeler K.B."/>
            <person name="Maiti R."/>
            <person name="Marra M.A."/>
            <person name="Marra R.E."/>
            <person name="Mathewson C.A."/>
            <person name="Mitchell T.G."/>
            <person name="Pertea M."/>
            <person name="Riggs F.R."/>
            <person name="Salzberg S.L."/>
            <person name="Schein J.E."/>
            <person name="Shvartsbeyn A."/>
            <person name="Shin H."/>
            <person name="Shumway M."/>
            <person name="Specht C.A."/>
            <person name="Suh B.B."/>
            <person name="Tenney A."/>
            <person name="Utterback T.R."/>
            <person name="Wickes B.L."/>
            <person name="Wortman J.R."/>
            <person name="Wye N.H."/>
            <person name="Kronstad J.W."/>
            <person name="Lodge J.K."/>
            <person name="Heitman J."/>
            <person name="Davis R.W."/>
            <person name="Fraser C.M."/>
            <person name="Hyman R.W."/>
        </authorList>
    </citation>
    <scope>NUCLEOTIDE SEQUENCE [LARGE SCALE GENOMIC DNA]</scope>
    <source>
        <strain>JEC21 / ATCC MYA-565</strain>
    </source>
</reference>
<reference key="2">
    <citation type="submission" date="2006-02" db="UniProtKB">
        <authorList>
            <person name="Pemberton T.J."/>
        </authorList>
    </citation>
    <scope>REVISION OF GENE MODEL</scope>
</reference>
<gene>
    <name type="primary">CYP10</name>
    <name type="ordered locus">CNE00680</name>
</gene>
<organism>
    <name type="scientific">Cryptococcus neoformans var. neoformans serotype D (strain JEC21 / ATCC MYA-565)</name>
    <name type="common">Filobasidiella neoformans</name>
    <dbReference type="NCBI Taxonomy" id="214684"/>
    <lineage>
        <taxon>Eukaryota</taxon>
        <taxon>Fungi</taxon>
        <taxon>Dikarya</taxon>
        <taxon>Basidiomycota</taxon>
        <taxon>Agaricomycotina</taxon>
        <taxon>Tremellomycetes</taxon>
        <taxon>Tremellales</taxon>
        <taxon>Cryptococcaceae</taxon>
        <taxon>Cryptococcus</taxon>
        <taxon>Cryptococcus neoformans species complex</taxon>
    </lineage>
</organism>
<protein>
    <recommendedName>
        <fullName>Peptidyl-prolyl cis-trans isomerase-like 3</fullName>
        <shortName>PPIase</shortName>
        <ecNumber>5.2.1.8</ecNumber>
    </recommendedName>
    <alternativeName>
        <fullName>Rotamase</fullName>
    </alternativeName>
</protein>
<dbReference type="EC" id="5.2.1.8"/>
<dbReference type="EMBL" id="AE017345">
    <property type="protein sequence ID" value="AAW43482.2"/>
    <property type="molecule type" value="Genomic_DNA"/>
</dbReference>
<dbReference type="RefSeq" id="XP_570789.1">
    <property type="nucleotide sequence ID" value="XM_570789.1"/>
</dbReference>
<dbReference type="SMR" id="P0CP86"/>
<dbReference type="STRING" id="214684.P0CP86"/>
<dbReference type="PaxDb" id="214684-P0CP86"/>
<dbReference type="EnsemblFungi" id="AAW43482">
    <property type="protein sequence ID" value="AAW43482"/>
    <property type="gene ID" value="CNE00680"/>
</dbReference>
<dbReference type="VEuPathDB" id="FungiDB:CNE00680"/>
<dbReference type="eggNOG" id="KOG0884">
    <property type="taxonomic scope" value="Eukaryota"/>
</dbReference>
<dbReference type="InParanoid" id="P0CP86"/>
<dbReference type="OrthoDB" id="271386at2759"/>
<dbReference type="Proteomes" id="UP000002149">
    <property type="component" value="Chromosome 5"/>
</dbReference>
<dbReference type="GO" id="GO:0071013">
    <property type="term" value="C:catalytic step 2 spliceosome"/>
    <property type="evidence" value="ECO:0000318"/>
    <property type="project" value="GO_Central"/>
</dbReference>
<dbReference type="GO" id="GO:0003755">
    <property type="term" value="F:peptidyl-prolyl cis-trans isomerase activity"/>
    <property type="evidence" value="ECO:0000318"/>
    <property type="project" value="GO_Central"/>
</dbReference>
<dbReference type="GO" id="GO:0006457">
    <property type="term" value="P:protein folding"/>
    <property type="evidence" value="ECO:0000318"/>
    <property type="project" value="GO_Central"/>
</dbReference>
<dbReference type="CDD" id="cd01928">
    <property type="entry name" value="Cyclophilin_PPIL3_like"/>
    <property type="match status" value="1"/>
</dbReference>
<dbReference type="FunFam" id="2.40.100.10:FF:000012">
    <property type="entry name" value="Peptidyl-prolyl cis-trans isomerase"/>
    <property type="match status" value="1"/>
</dbReference>
<dbReference type="Gene3D" id="2.40.100.10">
    <property type="entry name" value="Cyclophilin-like"/>
    <property type="match status" value="1"/>
</dbReference>
<dbReference type="InterPro" id="IPR029000">
    <property type="entry name" value="Cyclophilin-like_dom_sf"/>
</dbReference>
<dbReference type="InterPro" id="IPR024936">
    <property type="entry name" value="Cyclophilin-type_PPIase"/>
</dbReference>
<dbReference type="InterPro" id="IPR020892">
    <property type="entry name" value="Cyclophilin-type_PPIase_CS"/>
</dbReference>
<dbReference type="InterPro" id="IPR002130">
    <property type="entry name" value="Cyclophilin-type_PPIase_dom"/>
</dbReference>
<dbReference type="InterPro" id="IPR044666">
    <property type="entry name" value="Cyclophilin_A-like"/>
</dbReference>
<dbReference type="PANTHER" id="PTHR45625:SF2">
    <property type="entry name" value="PEPTIDYL-PROLYL CIS-TRANS ISOMERASE-LIKE 3"/>
    <property type="match status" value="1"/>
</dbReference>
<dbReference type="PANTHER" id="PTHR45625">
    <property type="entry name" value="PEPTIDYL-PROLYL CIS-TRANS ISOMERASE-RELATED"/>
    <property type="match status" value="1"/>
</dbReference>
<dbReference type="Pfam" id="PF00160">
    <property type="entry name" value="Pro_isomerase"/>
    <property type="match status" value="1"/>
</dbReference>
<dbReference type="PIRSF" id="PIRSF001467">
    <property type="entry name" value="Peptidylpro_ismrse"/>
    <property type="match status" value="1"/>
</dbReference>
<dbReference type="PRINTS" id="PR00153">
    <property type="entry name" value="CSAPPISMRASE"/>
</dbReference>
<dbReference type="SUPFAM" id="SSF50891">
    <property type="entry name" value="Cyclophilin-like"/>
    <property type="match status" value="1"/>
</dbReference>
<dbReference type="PROSITE" id="PS00170">
    <property type="entry name" value="CSA_PPIASE_1"/>
    <property type="match status" value="1"/>
</dbReference>
<dbReference type="PROSITE" id="PS50072">
    <property type="entry name" value="CSA_PPIASE_2"/>
    <property type="match status" value="1"/>
</dbReference>
<keyword id="KW-0413">Isomerase</keyword>
<keyword id="KW-1185">Reference proteome</keyword>
<keyword id="KW-0697">Rotamase</keyword>
<accession>P0CP86</accession>
<accession>Q55SX4</accession>
<accession>Q5KHA8</accession>